<dbReference type="EC" id="4.1.1.65" evidence="1"/>
<dbReference type="EMBL" id="AE004439">
    <property type="protein sequence ID" value="AAK03983.1"/>
    <property type="molecule type" value="Genomic_DNA"/>
</dbReference>
<dbReference type="SMR" id="Q9CJU2"/>
<dbReference type="STRING" id="272843.PM1899"/>
<dbReference type="EnsemblBacteria" id="AAK03983">
    <property type="protein sequence ID" value="AAK03983"/>
    <property type="gene ID" value="PM1899"/>
</dbReference>
<dbReference type="KEGG" id="pmu:PM1899"/>
<dbReference type="PATRIC" id="fig|272843.6.peg.1921"/>
<dbReference type="HOGENOM" id="CLU_029061_4_1_6"/>
<dbReference type="OrthoDB" id="9802030at2"/>
<dbReference type="UniPathway" id="UPA00558">
    <property type="reaction ID" value="UER00616"/>
</dbReference>
<dbReference type="Proteomes" id="UP000000809">
    <property type="component" value="Chromosome"/>
</dbReference>
<dbReference type="GO" id="GO:0005886">
    <property type="term" value="C:plasma membrane"/>
    <property type="evidence" value="ECO:0007669"/>
    <property type="project" value="UniProtKB-SubCell"/>
</dbReference>
<dbReference type="GO" id="GO:0004609">
    <property type="term" value="F:phosphatidylserine decarboxylase activity"/>
    <property type="evidence" value="ECO:0007669"/>
    <property type="project" value="UniProtKB-UniRule"/>
</dbReference>
<dbReference type="GO" id="GO:0006646">
    <property type="term" value="P:phosphatidylethanolamine biosynthetic process"/>
    <property type="evidence" value="ECO:0007669"/>
    <property type="project" value="UniProtKB-UniRule"/>
</dbReference>
<dbReference type="HAMAP" id="MF_00662">
    <property type="entry name" value="PS_decarb_PSD_B_type1"/>
    <property type="match status" value="1"/>
</dbReference>
<dbReference type="InterPro" id="IPR003817">
    <property type="entry name" value="PS_Dcarbxylase"/>
</dbReference>
<dbReference type="InterPro" id="IPR033177">
    <property type="entry name" value="PSD-B"/>
</dbReference>
<dbReference type="InterPro" id="IPR033178">
    <property type="entry name" value="PSD_type1_pro"/>
</dbReference>
<dbReference type="NCBIfam" id="TIGR00163">
    <property type="entry name" value="PS_decarb"/>
    <property type="match status" value="1"/>
</dbReference>
<dbReference type="PANTHER" id="PTHR10067">
    <property type="entry name" value="PHOSPHATIDYLSERINE DECARBOXYLASE"/>
    <property type="match status" value="1"/>
</dbReference>
<dbReference type="PANTHER" id="PTHR10067:SF6">
    <property type="entry name" value="PHOSPHATIDYLSERINE DECARBOXYLASE PROENZYME, MITOCHONDRIAL"/>
    <property type="match status" value="1"/>
</dbReference>
<dbReference type="Pfam" id="PF02666">
    <property type="entry name" value="PS_Dcarbxylase"/>
    <property type="match status" value="1"/>
</dbReference>
<gene>
    <name evidence="1" type="primary">psd</name>
    <name type="ordered locus">PM1899</name>
</gene>
<keyword id="KW-1003">Cell membrane</keyword>
<keyword id="KW-0210">Decarboxylase</keyword>
<keyword id="KW-0444">Lipid biosynthesis</keyword>
<keyword id="KW-0443">Lipid metabolism</keyword>
<keyword id="KW-0456">Lyase</keyword>
<keyword id="KW-0472">Membrane</keyword>
<keyword id="KW-0594">Phospholipid biosynthesis</keyword>
<keyword id="KW-1208">Phospholipid metabolism</keyword>
<keyword id="KW-0670">Pyruvate</keyword>
<keyword id="KW-1185">Reference proteome</keyword>
<keyword id="KW-0865">Zymogen</keyword>
<proteinExistence type="inferred from homology"/>
<comment type="function">
    <text evidence="1">Catalyzes the formation of phosphatidylethanolamine (PtdEtn) from phosphatidylserine (PtdSer).</text>
</comment>
<comment type="catalytic activity">
    <reaction evidence="1">
        <text>a 1,2-diacyl-sn-glycero-3-phospho-L-serine + H(+) = a 1,2-diacyl-sn-glycero-3-phosphoethanolamine + CO2</text>
        <dbReference type="Rhea" id="RHEA:20828"/>
        <dbReference type="ChEBI" id="CHEBI:15378"/>
        <dbReference type="ChEBI" id="CHEBI:16526"/>
        <dbReference type="ChEBI" id="CHEBI:57262"/>
        <dbReference type="ChEBI" id="CHEBI:64612"/>
        <dbReference type="EC" id="4.1.1.65"/>
    </reaction>
</comment>
<comment type="cofactor">
    <cofactor evidence="1">
        <name>pyruvate</name>
        <dbReference type="ChEBI" id="CHEBI:15361"/>
    </cofactor>
    <text evidence="1">Binds 1 pyruvoyl group covalently per subunit.</text>
</comment>
<comment type="pathway">
    <text evidence="1">Phospholipid metabolism; phosphatidylethanolamine biosynthesis; phosphatidylethanolamine from CDP-diacylglycerol: step 2/2.</text>
</comment>
<comment type="subunit">
    <text evidence="1">Heterodimer of a large membrane-associated beta subunit and a small pyruvoyl-containing alpha subunit.</text>
</comment>
<comment type="subcellular location">
    <subcellularLocation>
        <location evidence="1">Cell membrane</location>
        <topology evidence="1">Peripheral membrane protein</topology>
    </subcellularLocation>
</comment>
<comment type="PTM">
    <text evidence="1">Is synthesized initially as an inactive proenzyme. Formation of the active enzyme involves a self-maturation process in which the active site pyruvoyl group is generated from an internal serine residue via an autocatalytic post-translational modification. Two non-identical subunits are generated from the proenzyme in this reaction, and the pyruvate is formed at the N-terminus of the alpha chain, which is derived from the carboxyl end of the proenzyme. The autoendoproteolytic cleavage occurs by a canonical serine protease mechanism, in which the side chain hydroxyl group of the serine supplies its oxygen atom to form the C-terminus of the beta chain, while the remainder of the serine residue undergoes an oxidative deamination to produce ammonia and the pyruvoyl prosthetic group on the alpha chain. During this reaction, the Ser that is part of the protease active site of the proenzyme becomes the pyruvoyl prosthetic group, which constitutes an essential element of the active site of the mature decarboxylase.</text>
</comment>
<comment type="similarity">
    <text evidence="1">Belongs to the phosphatidylserine decarboxylase family. PSD-B subfamily. Prokaryotic type I sub-subfamily.</text>
</comment>
<name>PSD_PASMU</name>
<accession>Q9CJU2</accession>
<evidence type="ECO:0000255" key="1">
    <source>
        <dbReference type="HAMAP-Rule" id="MF_00662"/>
    </source>
</evidence>
<feature type="chain" id="PRO_0000029681" description="Phosphatidylserine decarboxylase beta chain" evidence="1">
    <location>
        <begin position="1"/>
        <end position="261"/>
    </location>
</feature>
<feature type="chain" id="PRO_0000029682" description="Phosphatidylserine decarboxylase alpha chain" evidence="1">
    <location>
        <begin position="262"/>
        <end position="295"/>
    </location>
</feature>
<feature type="active site" description="Charge relay system; for autoendoproteolytic cleavage activity" evidence="1">
    <location>
        <position position="101"/>
    </location>
</feature>
<feature type="active site" description="Charge relay system; for autoendoproteolytic cleavage activity" evidence="1">
    <location>
        <position position="158"/>
    </location>
</feature>
<feature type="active site" description="Charge relay system; for autoendoproteolytic cleavage activity" evidence="1">
    <location>
        <position position="262"/>
    </location>
</feature>
<feature type="active site" description="Schiff-base intermediate with substrate; via pyruvic acid; for decarboxylase activity" evidence="1">
    <location>
        <position position="262"/>
    </location>
</feature>
<feature type="site" description="Cleavage (non-hydrolytic); by autocatalysis" evidence="1">
    <location>
        <begin position="261"/>
        <end position="262"/>
    </location>
</feature>
<feature type="modified residue" description="Pyruvic acid (Ser); by autocatalysis" evidence="1">
    <location>
        <position position="262"/>
    </location>
</feature>
<sequence>MNILEKKAQLSYWQRIKIAFQYVMPQLYLTRLAGWFAKQQWGAVTHFVIKLFAKKYHVDMSEAAKPNFSDYASFNEFFIRPLADNARPINQNPTALCLPADGRISQLGHIEQDLLLQAKGHYFSLNDLLAGDEALAHHFKDGEFATTYLSPRDYHRVHMPCDATLCKMIYVPGDLFSVNPFLAEHVPNLFARNERVICVFDTEFGKMVQILVGATITASMSTVWAGVINPPRPEKITTWTYEGASAVKLTKGQEMGAFQLGSTVINLFEKDRVQLASHLQVDSPVRMGEILAHQK</sequence>
<reference key="1">
    <citation type="journal article" date="2001" name="Proc. Natl. Acad. Sci. U.S.A.">
        <title>Complete genomic sequence of Pasteurella multocida Pm70.</title>
        <authorList>
            <person name="May B.J."/>
            <person name="Zhang Q."/>
            <person name="Li L.L."/>
            <person name="Paustian M.L."/>
            <person name="Whittam T.S."/>
            <person name="Kapur V."/>
        </authorList>
    </citation>
    <scope>NUCLEOTIDE SEQUENCE [LARGE SCALE GENOMIC DNA]</scope>
    <source>
        <strain>Pm70</strain>
    </source>
</reference>
<protein>
    <recommendedName>
        <fullName evidence="1">Phosphatidylserine decarboxylase proenzyme</fullName>
        <ecNumber evidence="1">4.1.1.65</ecNumber>
    </recommendedName>
    <component>
        <recommendedName>
            <fullName evidence="1">Phosphatidylserine decarboxylase alpha chain</fullName>
        </recommendedName>
    </component>
    <component>
        <recommendedName>
            <fullName evidence="1">Phosphatidylserine decarboxylase beta chain</fullName>
        </recommendedName>
    </component>
</protein>
<organism>
    <name type="scientific">Pasteurella multocida (strain Pm70)</name>
    <dbReference type="NCBI Taxonomy" id="272843"/>
    <lineage>
        <taxon>Bacteria</taxon>
        <taxon>Pseudomonadati</taxon>
        <taxon>Pseudomonadota</taxon>
        <taxon>Gammaproteobacteria</taxon>
        <taxon>Pasteurellales</taxon>
        <taxon>Pasteurellaceae</taxon>
        <taxon>Pasteurella</taxon>
    </lineage>
</organism>